<keyword id="KW-0143">Chaperone</keyword>
<keyword id="KW-0963">Cytoplasm</keyword>
<keyword id="KW-0235">DNA replication</keyword>
<keyword id="KW-0479">Metal-binding</keyword>
<keyword id="KW-0677">Repeat</keyword>
<keyword id="KW-0346">Stress response</keyword>
<keyword id="KW-0862">Zinc</keyword>
<keyword id="KW-0863">Zinc-finger</keyword>
<sequence length="370" mass="40795">MAVKRDYYEVLGVQRNASQDEIKKAFRRLARQYHPDVNKAPDAEAKFKEINEAYEVLSDPEKRSMYDRFGHAGPTAAPGFDPFSSADPFSSIFETFFGGTMRGSQRGPQRGADLRYTLSISFEEAVFGVEKTIEFRRLETCPACRGSGAEPGTEPVRCPKCGGLGEIRQRAPLFNMVTVTTCDMCRGEGTVIAIPCRECRGEGRVRQTRKITVRVPPGVDNSSQIRISGEGDAGPRGGPYGNLYVVIDVQPHPYFIREGNDIILELPLNVAQAALGVEVEVPTIDGTEHLRIPPGVQSGAVFRIRGKGVPFLRSSGRGDQIVVVRVVIPTNLTDHQRRLFEELARSLEKEPIGGQRDEGFFGRIKNALGL</sequence>
<gene>
    <name evidence="1" type="primary">dnaJ</name>
    <name type="ordered locus">RoseRS_3459</name>
</gene>
<reference key="1">
    <citation type="submission" date="2007-04" db="EMBL/GenBank/DDBJ databases">
        <title>Complete sequence of Roseiflexus sp. RS-1.</title>
        <authorList>
            <consortium name="US DOE Joint Genome Institute"/>
            <person name="Copeland A."/>
            <person name="Lucas S."/>
            <person name="Lapidus A."/>
            <person name="Barry K."/>
            <person name="Detter J.C."/>
            <person name="Glavina del Rio T."/>
            <person name="Hammon N."/>
            <person name="Israni S."/>
            <person name="Dalin E."/>
            <person name="Tice H."/>
            <person name="Pitluck S."/>
            <person name="Chertkov O."/>
            <person name="Brettin T."/>
            <person name="Bruce D."/>
            <person name="Han C."/>
            <person name="Schmutz J."/>
            <person name="Larimer F."/>
            <person name="Land M."/>
            <person name="Hauser L."/>
            <person name="Kyrpides N."/>
            <person name="Mikhailova N."/>
            <person name="Bryant D.A."/>
            <person name="Richardson P."/>
        </authorList>
    </citation>
    <scope>NUCLEOTIDE SEQUENCE [LARGE SCALE GENOMIC DNA]</scope>
    <source>
        <strain>RS-1</strain>
    </source>
</reference>
<evidence type="ECO:0000255" key="1">
    <source>
        <dbReference type="HAMAP-Rule" id="MF_01152"/>
    </source>
</evidence>
<proteinExistence type="inferred from homology"/>
<protein>
    <recommendedName>
        <fullName evidence="1">Chaperone protein DnaJ</fullName>
    </recommendedName>
</protein>
<name>DNAJ_ROSS1</name>
<comment type="function">
    <text evidence="1">Participates actively in the response to hyperosmotic and heat shock by preventing the aggregation of stress-denatured proteins and by disaggregating proteins, also in an autonomous, DnaK-independent fashion. Unfolded proteins bind initially to DnaJ; upon interaction with the DnaJ-bound protein, DnaK hydrolyzes its bound ATP, resulting in the formation of a stable complex. GrpE releases ADP from DnaK; ATP binding to DnaK triggers the release of the substrate protein, thus completing the reaction cycle. Several rounds of ATP-dependent interactions between DnaJ, DnaK and GrpE are required for fully efficient folding. Also involved, together with DnaK and GrpE, in the DNA replication of plasmids through activation of initiation proteins.</text>
</comment>
<comment type="cofactor">
    <cofactor evidence="1">
        <name>Zn(2+)</name>
        <dbReference type="ChEBI" id="CHEBI:29105"/>
    </cofactor>
    <text evidence="1">Binds 2 Zn(2+) ions per monomer.</text>
</comment>
<comment type="subunit">
    <text evidence="1">Homodimer.</text>
</comment>
<comment type="subcellular location">
    <subcellularLocation>
        <location evidence="1">Cytoplasm</location>
    </subcellularLocation>
</comment>
<comment type="domain">
    <text evidence="1">The J domain is necessary and sufficient to stimulate DnaK ATPase activity. Zinc center 1 plays an important role in the autonomous, DnaK-independent chaperone activity of DnaJ. Zinc center 2 is essential for interaction with DnaK and for DnaJ activity.</text>
</comment>
<comment type="similarity">
    <text evidence="1">Belongs to the DnaJ family.</text>
</comment>
<accession>A5UYW4</accession>
<dbReference type="EMBL" id="CP000686">
    <property type="protein sequence ID" value="ABQ91817.1"/>
    <property type="molecule type" value="Genomic_DNA"/>
</dbReference>
<dbReference type="RefSeq" id="WP_011958159.1">
    <property type="nucleotide sequence ID" value="NC_009523.1"/>
</dbReference>
<dbReference type="SMR" id="A5UYW4"/>
<dbReference type="STRING" id="357808.RoseRS_3459"/>
<dbReference type="KEGG" id="rrs:RoseRS_3459"/>
<dbReference type="eggNOG" id="COG0484">
    <property type="taxonomic scope" value="Bacteria"/>
</dbReference>
<dbReference type="HOGENOM" id="CLU_017633_0_7_0"/>
<dbReference type="OrthoDB" id="9779889at2"/>
<dbReference type="Proteomes" id="UP000006554">
    <property type="component" value="Chromosome"/>
</dbReference>
<dbReference type="GO" id="GO:0005737">
    <property type="term" value="C:cytoplasm"/>
    <property type="evidence" value="ECO:0007669"/>
    <property type="project" value="UniProtKB-SubCell"/>
</dbReference>
<dbReference type="GO" id="GO:0005524">
    <property type="term" value="F:ATP binding"/>
    <property type="evidence" value="ECO:0007669"/>
    <property type="project" value="InterPro"/>
</dbReference>
<dbReference type="GO" id="GO:0031072">
    <property type="term" value="F:heat shock protein binding"/>
    <property type="evidence" value="ECO:0007669"/>
    <property type="project" value="InterPro"/>
</dbReference>
<dbReference type="GO" id="GO:0051082">
    <property type="term" value="F:unfolded protein binding"/>
    <property type="evidence" value="ECO:0007669"/>
    <property type="project" value="UniProtKB-UniRule"/>
</dbReference>
<dbReference type="GO" id="GO:0008270">
    <property type="term" value="F:zinc ion binding"/>
    <property type="evidence" value="ECO:0007669"/>
    <property type="project" value="UniProtKB-UniRule"/>
</dbReference>
<dbReference type="GO" id="GO:0051085">
    <property type="term" value="P:chaperone cofactor-dependent protein refolding"/>
    <property type="evidence" value="ECO:0007669"/>
    <property type="project" value="TreeGrafter"/>
</dbReference>
<dbReference type="GO" id="GO:0006260">
    <property type="term" value="P:DNA replication"/>
    <property type="evidence" value="ECO:0007669"/>
    <property type="project" value="UniProtKB-KW"/>
</dbReference>
<dbReference type="GO" id="GO:0042026">
    <property type="term" value="P:protein refolding"/>
    <property type="evidence" value="ECO:0007669"/>
    <property type="project" value="TreeGrafter"/>
</dbReference>
<dbReference type="GO" id="GO:0009408">
    <property type="term" value="P:response to heat"/>
    <property type="evidence" value="ECO:0007669"/>
    <property type="project" value="InterPro"/>
</dbReference>
<dbReference type="CDD" id="cd06257">
    <property type="entry name" value="DnaJ"/>
    <property type="match status" value="1"/>
</dbReference>
<dbReference type="CDD" id="cd10747">
    <property type="entry name" value="DnaJ_C"/>
    <property type="match status" value="1"/>
</dbReference>
<dbReference type="CDD" id="cd10719">
    <property type="entry name" value="DnaJ_zf"/>
    <property type="match status" value="1"/>
</dbReference>
<dbReference type="FunFam" id="1.10.287.110:FF:000031">
    <property type="entry name" value="Molecular chaperone DnaJ"/>
    <property type="match status" value="1"/>
</dbReference>
<dbReference type="FunFam" id="2.10.230.10:FF:000002">
    <property type="entry name" value="Molecular chaperone DnaJ"/>
    <property type="match status" value="1"/>
</dbReference>
<dbReference type="FunFam" id="2.60.260.20:FF:000004">
    <property type="entry name" value="Molecular chaperone DnaJ"/>
    <property type="match status" value="1"/>
</dbReference>
<dbReference type="Gene3D" id="1.10.287.110">
    <property type="entry name" value="DnaJ domain"/>
    <property type="match status" value="1"/>
</dbReference>
<dbReference type="Gene3D" id="2.10.230.10">
    <property type="entry name" value="Heat shock protein DnaJ, cysteine-rich domain"/>
    <property type="match status" value="1"/>
</dbReference>
<dbReference type="Gene3D" id="2.60.260.20">
    <property type="entry name" value="Urease metallochaperone UreE, N-terminal domain"/>
    <property type="match status" value="2"/>
</dbReference>
<dbReference type="HAMAP" id="MF_01152">
    <property type="entry name" value="DnaJ"/>
    <property type="match status" value="1"/>
</dbReference>
<dbReference type="InterPro" id="IPR012724">
    <property type="entry name" value="DnaJ"/>
</dbReference>
<dbReference type="InterPro" id="IPR002939">
    <property type="entry name" value="DnaJ_C"/>
</dbReference>
<dbReference type="InterPro" id="IPR001623">
    <property type="entry name" value="DnaJ_domain"/>
</dbReference>
<dbReference type="InterPro" id="IPR018253">
    <property type="entry name" value="DnaJ_domain_CS"/>
</dbReference>
<dbReference type="InterPro" id="IPR008971">
    <property type="entry name" value="HSP40/DnaJ_pept-bd"/>
</dbReference>
<dbReference type="InterPro" id="IPR001305">
    <property type="entry name" value="HSP_DnaJ_Cys-rich_dom"/>
</dbReference>
<dbReference type="InterPro" id="IPR036410">
    <property type="entry name" value="HSP_DnaJ_Cys-rich_dom_sf"/>
</dbReference>
<dbReference type="InterPro" id="IPR036869">
    <property type="entry name" value="J_dom_sf"/>
</dbReference>
<dbReference type="NCBIfam" id="TIGR02349">
    <property type="entry name" value="DnaJ_bact"/>
    <property type="match status" value="1"/>
</dbReference>
<dbReference type="NCBIfam" id="NF008035">
    <property type="entry name" value="PRK10767.1"/>
    <property type="match status" value="1"/>
</dbReference>
<dbReference type="PANTHER" id="PTHR43096:SF48">
    <property type="entry name" value="CHAPERONE PROTEIN DNAJ"/>
    <property type="match status" value="1"/>
</dbReference>
<dbReference type="PANTHER" id="PTHR43096">
    <property type="entry name" value="DNAJ HOMOLOG 1, MITOCHONDRIAL-RELATED"/>
    <property type="match status" value="1"/>
</dbReference>
<dbReference type="Pfam" id="PF00226">
    <property type="entry name" value="DnaJ"/>
    <property type="match status" value="1"/>
</dbReference>
<dbReference type="Pfam" id="PF01556">
    <property type="entry name" value="DnaJ_C"/>
    <property type="match status" value="1"/>
</dbReference>
<dbReference type="Pfam" id="PF00684">
    <property type="entry name" value="DnaJ_CXXCXGXG"/>
    <property type="match status" value="1"/>
</dbReference>
<dbReference type="PRINTS" id="PR00625">
    <property type="entry name" value="JDOMAIN"/>
</dbReference>
<dbReference type="SMART" id="SM00271">
    <property type="entry name" value="DnaJ"/>
    <property type="match status" value="1"/>
</dbReference>
<dbReference type="SUPFAM" id="SSF46565">
    <property type="entry name" value="Chaperone J-domain"/>
    <property type="match status" value="1"/>
</dbReference>
<dbReference type="SUPFAM" id="SSF57938">
    <property type="entry name" value="DnaJ/Hsp40 cysteine-rich domain"/>
    <property type="match status" value="1"/>
</dbReference>
<dbReference type="SUPFAM" id="SSF49493">
    <property type="entry name" value="HSP40/DnaJ peptide-binding domain"/>
    <property type="match status" value="2"/>
</dbReference>
<dbReference type="PROSITE" id="PS00636">
    <property type="entry name" value="DNAJ_1"/>
    <property type="match status" value="1"/>
</dbReference>
<dbReference type="PROSITE" id="PS50076">
    <property type="entry name" value="DNAJ_2"/>
    <property type="match status" value="1"/>
</dbReference>
<dbReference type="PROSITE" id="PS51188">
    <property type="entry name" value="ZF_CR"/>
    <property type="match status" value="1"/>
</dbReference>
<feature type="chain" id="PRO_1000085279" description="Chaperone protein DnaJ">
    <location>
        <begin position="1"/>
        <end position="370"/>
    </location>
</feature>
<feature type="domain" description="J" evidence="1">
    <location>
        <begin position="6"/>
        <end position="70"/>
    </location>
</feature>
<feature type="repeat" description="CXXCXGXG motif">
    <location>
        <begin position="141"/>
        <end position="148"/>
    </location>
</feature>
<feature type="repeat" description="CXXCXGXG motif">
    <location>
        <begin position="158"/>
        <end position="165"/>
    </location>
</feature>
<feature type="repeat" description="CXXCXGXG motif">
    <location>
        <begin position="182"/>
        <end position="189"/>
    </location>
</feature>
<feature type="repeat" description="CXXCXGXG motif">
    <location>
        <begin position="196"/>
        <end position="203"/>
    </location>
</feature>
<feature type="zinc finger region" description="CR-type" evidence="1">
    <location>
        <begin position="128"/>
        <end position="208"/>
    </location>
</feature>
<feature type="binding site" evidence="1">
    <location>
        <position position="141"/>
    </location>
    <ligand>
        <name>Zn(2+)</name>
        <dbReference type="ChEBI" id="CHEBI:29105"/>
        <label>1</label>
    </ligand>
</feature>
<feature type="binding site" evidence="1">
    <location>
        <position position="144"/>
    </location>
    <ligand>
        <name>Zn(2+)</name>
        <dbReference type="ChEBI" id="CHEBI:29105"/>
        <label>1</label>
    </ligand>
</feature>
<feature type="binding site" evidence="1">
    <location>
        <position position="158"/>
    </location>
    <ligand>
        <name>Zn(2+)</name>
        <dbReference type="ChEBI" id="CHEBI:29105"/>
        <label>2</label>
    </ligand>
</feature>
<feature type="binding site" evidence="1">
    <location>
        <position position="161"/>
    </location>
    <ligand>
        <name>Zn(2+)</name>
        <dbReference type="ChEBI" id="CHEBI:29105"/>
        <label>2</label>
    </ligand>
</feature>
<feature type="binding site" evidence="1">
    <location>
        <position position="182"/>
    </location>
    <ligand>
        <name>Zn(2+)</name>
        <dbReference type="ChEBI" id="CHEBI:29105"/>
        <label>2</label>
    </ligand>
</feature>
<feature type="binding site" evidence="1">
    <location>
        <position position="185"/>
    </location>
    <ligand>
        <name>Zn(2+)</name>
        <dbReference type="ChEBI" id="CHEBI:29105"/>
        <label>2</label>
    </ligand>
</feature>
<feature type="binding site" evidence="1">
    <location>
        <position position="196"/>
    </location>
    <ligand>
        <name>Zn(2+)</name>
        <dbReference type="ChEBI" id="CHEBI:29105"/>
        <label>1</label>
    </ligand>
</feature>
<feature type="binding site" evidence="1">
    <location>
        <position position="199"/>
    </location>
    <ligand>
        <name>Zn(2+)</name>
        <dbReference type="ChEBI" id="CHEBI:29105"/>
        <label>1</label>
    </ligand>
</feature>
<organism>
    <name type="scientific">Roseiflexus sp. (strain RS-1)</name>
    <dbReference type="NCBI Taxonomy" id="357808"/>
    <lineage>
        <taxon>Bacteria</taxon>
        <taxon>Bacillati</taxon>
        <taxon>Chloroflexota</taxon>
        <taxon>Chloroflexia</taxon>
        <taxon>Chloroflexales</taxon>
        <taxon>Roseiflexineae</taxon>
        <taxon>Roseiflexaceae</taxon>
        <taxon>Roseiflexus</taxon>
    </lineage>
</organism>